<dbReference type="EMBL" id="AP009247">
    <property type="protein sequence ID" value="BAF61723.1"/>
    <property type="molecule type" value="Genomic_DNA"/>
</dbReference>
<dbReference type="RefSeq" id="WP_011929993.1">
    <property type="nucleotide sequence ID" value="NC_009465.1"/>
</dbReference>
<dbReference type="SMR" id="A5CWE0"/>
<dbReference type="STRING" id="412965.COSY_0610"/>
<dbReference type="KEGG" id="vok:COSY_0610"/>
<dbReference type="eggNOG" id="COG0238">
    <property type="taxonomic scope" value="Bacteria"/>
</dbReference>
<dbReference type="HOGENOM" id="CLU_148710_0_3_6"/>
<dbReference type="OrthoDB" id="9812008at2"/>
<dbReference type="Proteomes" id="UP000000247">
    <property type="component" value="Chromosome"/>
</dbReference>
<dbReference type="GO" id="GO:0022627">
    <property type="term" value="C:cytosolic small ribosomal subunit"/>
    <property type="evidence" value="ECO:0007669"/>
    <property type="project" value="TreeGrafter"/>
</dbReference>
<dbReference type="GO" id="GO:0070181">
    <property type="term" value="F:small ribosomal subunit rRNA binding"/>
    <property type="evidence" value="ECO:0007669"/>
    <property type="project" value="TreeGrafter"/>
</dbReference>
<dbReference type="GO" id="GO:0003735">
    <property type="term" value="F:structural constituent of ribosome"/>
    <property type="evidence" value="ECO:0007669"/>
    <property type="project" value="InterPro"/>
</dbReference>
<dbReference type="GO" id="GO:0006412">
    <property type="term" value="P:translation"/>
    <property type="evidence" value="ECO:0007669"/>
    <property type="project" value="UniProtKB-UniRule"/>
</dbReference>
<dbReference type="Gene3D" id="4.10.640.10">
    <property type="entry name" value="Ribosomal protein S18"/>
    <property type="match status" value="1"/>
</dbReference>
<dbReference type="HAMAP" id="MF_00270">
    <property type="entry name" value="Ribosomal_bS18"/>
    <property type="match status" value="1"/>
</dbReference>
<dbReference type="InterPro" id="IPR001648">
    <property type="entry name" value="Ribosomal_bS18"/>
</dbReference>
<dbReference type="InterPro" id="IPR036870">
    <property type="entry name" value="Ribosomal_bS18_sf"/>
</dbReference>
<dbReference type="NCBIfam" id="TIGR00165">
    <property type="entry name" value="S18"/>
    <property type="match status" value="1"/>
</dbReference>
<dbReference type="PANTHER" id="PTHR13479">
    <property type="entry name" value="30S RIBOSOMAL PROTEIN S18"/>
    <property type="match status" value="1"/>
</dbReference>
<dbReference type="PANTHER" id="PTHR13479:SF40">
    <property type="entry name" value="SMALL RIBOSOMAL SUBUNIT PROTEIN BS18M"/>
    <property type="match status" value="1"/>
</dbReference>
<dbReference type="Pfam" id="PF01084">
    <property type="entry name" value="Ribosomal_S18"/>
    <property type="match status" value="1"/>
</dbReference>
<dbReference type="PRINTS" id="PR00974">
    <property type="entry name" value="RIBOSOMALS18"/>
</dbReference>
<dbReference type="SUPFAM" id="SSF46911">
    <property type="entry name" value="Ribosomal protein S18"/>
    <property type="match status" value="1"/>
</dbReference>
<name>RS18_VESOH</name>
<gene>
    <name evidence="1" type="primary">rpsR</name>
    <name type="ordered locus">COSY_0610</name>
</gene>
<organism>
    <name type="scientific">Vesicomyosocius okutanii subsp. Calyptogena okutanii (strain HA)</name>
    <dbReference type="NCBI Taxonomy" id="412965"/>
    <lineage>
        <taxon>Bacteria</taxon>
        <taxon>Pseudomonadati</taxon>
        <taxon>Pseudomonadota</taxon>
        <taxon>Gammaproteobacteria</taxon>
        <taxon>Candidatus Pseudothioglobaceae</taxon>
        <taxon>Candidatus Vesicomyosocius</taxon>
    </lineage>
</organism>
<protein>
    <recommendedName>
        <fullName evidence="1">Small ribosomal subunit protein bS18</fullName>
    </recommendedName>
    <alternativeName>
        <fullName evidence="2">30S ribosomal protein S18</fullName>
    </alternativeName>
</protein>
<reference key="1">
    <citation type="journal article" date="2007" name="Curr. Biol.">
        <title>Reduced genome of the thioautotrophic intracellular symbiont in a deep-sea clam, Calyptogena okutanii.</title>
        <authorList>
            <person name="Kuwahara H."/>
            <person name="Yoshida T."/>
            <person name="Takaki Y."/>
            <person name="Shimamura S."/>
            <person name="Nishi S."/>
            <person name="Harada M."/>
            <person name="Matsuyama K."/>
            <person name="Takishita K."/>
            <person name="Kawato M."/>
            <person name="Uematsu K."/>
            <person name="Fujiwara Y."/>
            <person name="Sato T."/>
            <person name="Kato C."/>
            <person name="Kitagawa M."/>
            <person name="Kato I."/>
            <person name="Maruyama T."/>
        </authorList>
    </citation>
    <scope>NUCLEOTIDE SEQUENCE [LARGE SCALE GENOMIC DNA]</scope>
    <source>
        <strain>HA</strain>
    </source>
</reference>
<sequence length="84" mass="9725">MAKQIKRKRRPQIKINTFCRFTAAGVTKIDYKDIDILLKNIDESGKITPSRMTGTSAKFQRKLTTAIKRARFLALIPYTDKHKK</sequence>
<feature type="chain" id="PRO_0000345560" description="Small ribosomal subunit protein bS18">
    <location>
        <begin position="1"/>
        <end position="84"/>
    </location>
</feature>
<evidence type="ECO:0000255" key="1">
    <source>
        <dbReference type="HAMAP-Rule" id="MF_00270"/>
    </source>
</evidence>
<evidence type="ECO:0000305" key="2"/>
<proteinExistence type="inferred from homology"/>
<keyword id="KW-1185">Reference proteome</keyword>
<keyword id="KW-0687">Ribonucleoprotein</keyword>
<keyword id="KW-0689">Ribosomal protein</keyword>
<keyword id="KW-0694">RNA-binding</keyword>
<keyword id="KW-0699">rRNA-binding</keyword>
<comment type="function">
    <text evidence="1">Binds as a heterodimer with protein bS6 to the central domain of the 16S rRNA, where it helps stabilize the platform of the 30S subunit.</text>
</comment>
<comment type="subunit">
    <text evidence="1">Part of the 30S ribosomal subunit. Forms a tight heterodimer with protein bS6.</text>
</comment>
<comment type="similarity">
    <text evidence="1">Belongs to the bacterial ribosomal protein bS18 family.</text>
</comment>
<accession>A5CWE0</accession>